<evidence type="ECO:0000255" key="1">
    <source>
        <dbReference type="HAMAP-Rule" id="MF_01307"/>
    </source>
</evidence>
<evidence type="ECO:0000305" key="2"/>
<keyword id="KW-1185">Reference proteome</keyword>
<keyword id="KW-0687">Ribonucleoprotein</keyword>
<keyword id="KW-0689">Ribosomal protein</keyword>
<keyword id="KW-0694">RNA-binding</keyword>
<keyword id="KW-0699">rRNA-binding</keyword>
<sequence length="166" mass="17622">MRRIDPNTLELEEKVVAINRVAKVVKGGRRFRFAALVVVGDKNGRVGFGMGKAQEVPEAIRKAVEDAKKNLIEVPIVGTTIPHEIVGRFGAGRVLLKPASEGTGVIAGGPVRAVLDLAGVGDILSKSLGSNNPINMVRATVKGLQELKRAEDVAKLRGKTVEELLG</sequence>
<comment type="function">
    <text evidence="1">With S4 and S12 plays an important role in translational accuracy.</text>
</comment>
<comment type="function">
    <text evidence="1">Located at the back of the 30S subunit body where it stabilizes the conformation of the head with respect to the body.</text>
</comment>
<comment type="subunit">
    <text evidence="1">Part of the 30S ribosomal subunit. Contacts proteins S4 and S8.</text>
</comment>
<comment type="domain">
    <text>The N-terminal domain interacts with the head of the 30S subunit; the C-terminal domain interacts with the body and contacts protein S4. The interaction surface between S4 and S5 is involved in control of translational fidelity.</text>
</comment>
<comment type="similarity">
    <text evidence="1">Belongs to the universal ribosomal protein uS5 family.</text>
</comment>
<dbReference type="EMBL" id="AB017508">
    <property type="protein sequence ID" value="BAA75288.1"/>
    <property type="molecule type" value="Genomic_DNA"/>
</dbReference>
<dbReference type="EMBL" id="BA000004">
    <property type="protein sequence ID" value="BAB03870.1"/>
    <property type="molecule type" value="Genomic_DNA"/>
</dbReference>
<dbReference type="PIR" id="T44400">
    <property type="entry name" value="T44400"/>
</dbReference>
<dbReference type="RefSeq" id="WP_010896334.1">
    <property type="nucleotide sequence ID" value="NC_002570.2"/>
</dbReference>
<dbReference type="SMR" id="Q9Z9J7"/>
<dbReference type="STRING" id="272558.gene:10725991"/>
<dbReference type="GeneID" id="87595692"/>
<dbReference type="KEGG" id="bha:BH0151"/>
<dbReference type="eggNOG" id="COG0098">
    <property type="taxonomic scope" value="Bacteria"/>
</dbReference>
<dbReference type="HOGENOM" id="CLU_065898_2_2_9"/>
<dbReference type="OrthoDB" id="9809045at2"/>
<dbReference type="Proteomes" id="UP000001258">
    <property type="component" value="Chromosome"/>
</dbReference>
<dbReference type="GO" id="GO:0015935">
    <property type="term" value="C:small ribosomal subunit"/>
    <property type="evidence" value="ECO:0007669"/>
    <property type="project" value="InterPro"/>
</dbReference>
<dbReference type="GO" id="GO:0019843">
    <property type="term" value="F:rRNA binding"/>
    <property type="evidence" value="ECO:0007669"/>
    <property type="project" value="UniProtKB-UniRule"/>
</dbReference>
<dbReference type="GO" id="GO:0003735">
    <property type="term" value="F:structural constituent of ribosome"/>
    <property type="evidence" value="ECO:0007669"/>
    <property type="project" value="InterPro"/>
</dbReference>
<dbReference type="GO" id="GO:0006412">
    <property type="term" value="P:translation"/>
    <property type="evidence" value="ECO:0007669"/>
    <property type="project" value="UniProtKB-UniRule"/>
</dbReference>
<dbReference type="FunFam" id="3.30.160.20:FF:000001">
    <property type="entry name" value="30S ribosomal protein S5"/>
    <property type="match status" value="1"/>
</dbReference>
<dbReference type="FunFam" id="3.30.230.10:FF:000002">
    <property type="entry name" value="30S ribosomal protein S5"/>
    <property type="match status" value="1"/>
</dbReference>
<dbReference type="Gene3D" id="3.30.160.20">
    <property type="match status" value="1"/>
</dbReference>
<dbReference type="Gene3D" id="3.30.230.10">
    <property type="match status" value="1"/>
</dbReference>
<dbReference type="HAMAP" id="MF_01307_B">
    <property type="entry name" value="Ribosomal_uS5_B"/>
    <property type="match status" value="1"/>
</dbReference>
<dbReference type="InterPro" id="IPR020568">
    <property type="entry name" value="Ribosomal_Su5_D2-typ_SF"/>
</dbReference>
<dbReference type="InterPro" id="IPR000851">
    <property type="entry name" value="Ribosomal_uS5"/>
</dbReference>
<dbReference type="InterPro" id="IPR005712">
    <property type="entry name" value="Ribosomal_uS5_bac-type"/>
</dbReference>
<dbReference type="InterPro" id="IPR005324">
    <property type="entry name" value="Ribosomal_uS5_C"/>
</dbReference>
<dbReference type="InterPro" id="IPR013810">
    <property type="entry name" value="Ribosomal_uS5_N"/>
</dbReference>
<dbReference type="InterPro" id="IPR018192">
    <property type="entry name" value="Ribosomal_uS5_N_CS"/>
</dbReference>
<dbReference type="InterPro" id="IPR014721">
    <property type="entry name" value="Ribsml_uS5_D2-typ_fold_subgr"/>
</dbReference>
<dbReference type="NCBIfam" id="TIGR01021">
    <property type="entry name" value="rpsE_bact"/>
    <property type="match status" value="1"/>
</dbReference>
<dbReference type="PANTHER" id="PTHR48277">
    <property type="entry name" value="MITOCHONDRIAL RIBOSOMAL PROTEIN S5"/>
    <property type="match status" value="1"/>
</dbReference>
<dbReference type="PANTHER" id="PTHR48277:SF1">
    <property type="entry name" value="MITOCHONDRIAL RIBOSOMAL PROTEIN S5"/>
    <property type="match status" value="1"/>
</dbReference>
<dbReference type="Pfam" id="PF00333">
    <property type="entry name" value="Ribosomal_S5"/>
    <property type="match status" value="1"/>
</dbReference>
<dbReference type="Pfam" id="PF03719">
    <property type="entry name" value="Ribosomal_S5_C"/>
    <property type="match status" value="1"/>
</dbReference>
<dbReference type="SUPFAM" id="SSF54768">
    <property type="entry name" value="dsRNA-binding domain-like"/>
    <property type="match status" value="1"/>
</dbReference>
<dbReference type="SUPFAM" id="SSF54211">
    <property type="entry name" value="Ribosomal protein S5 domain 2-like"/>
    <property type="match status" value="1"/>
</dbReference>
<dbReference type="PROSITE" id="PS00585">
    <property type="entry name" value="RIBOSOMAL_S5"/>
    <property type="match status" value="1"/>
</dbReference>
<dbReference type="PROSITE" id="PS50881">
    <property type="entry name" value="S5_DSRBD"/>
    <property type="match status" value="1"/>
</dbReference>
<proteinExistence type="inferred from homology"/>
<gene>
    <name evidence="1" type="primary">rpsE</name>
    <name type="ordered locus">BH0151</name>
</gene>
<protein>
    <recommendedName>
        <fullName evidence="1">Small ribosomal subunit protein uS5</fullName>
    </recommendedName>
    <alternativeName>
        <fullName evidence="2">30S ribosomal protein S5</fullName>
    </alternativeName>
</protein>
<feature type="chain" id="PRO_0000131465" description="Small ribosomal subunit protein uS5">
    <location>
        <begin position="1"/>
        <end position="166"/>
    </location>
</feature>
<feature type="domain" description="S5 DRBM" evidence="1">
    <location>
        <begin position="11"/>
        <end position="74"/>
    </location>
</feature>
<name>RS5_HALH5</name>
<organism>
    <name type="scientific">Halalkalibacterium halodurans (strain ATCC BAA-125 / DSM 18197 / FERM 7344 / JCM 9153 / C-125)</name>
    <name type="common">Bacillus halodurans</name>
    <dbReference type="NCBI Taxonomy" id="272558"/>
    <lineage>
        <taxon>Bacteria</taxon>
        <taxon>Bacillati</taxon>
        <taxon>Bacillota</taxon>
        <taxon>Bacilli</taxon>
        <taxon>Bacillales</taxon>
        <taxon>Bacillaceae</taxon>
        <taxon>Halalkalibacterium (ex Joshi et al. 2022)</taxon>
    </lineage>
</organism>
<reference key="1">
    <citation type="journal article" date="1999" name="Biosci. Biotechnol. Biochem.">
        <title>Sequence analysis of a 32-kb region including the major ribosomal protein gene clusters from alkaliphilic Bacillus sp. strain C-125.</title>
        <authorList>
            <person name="Takami H."/>
            <person name="Takaki Y."/>
            <person name="Nakasone K."/>
            <person name="Hirama C."/>
            <person name="Inoue A."/>
            <person name="Horikoshi K."/>
        </authorList>
    </citation>
    <scope>NUCLEOTIDE SEQUENCE [GENOMIC DNA]</scope>
    <source>
        <strain>ATCC BAA-125 / DSM 18197 / FERM 7344 / JCM 9153 / C-125</strain>
    </source>
</reference>
<reference key="2">
    <citation type="journal article" date="2000" name="Nucleic Acids Res.">
        <title>Complete genome sequence of the alkaliphilic bacterium Bacillus halodurans and genomic sequence comparison with Bacillus subtilis.</title>
        <authorList>
            <person name="Takami H."/>
            <person name="Nakasone K."/>
            <person name="Takaki Y."/>
            <person name="Maeno G."/>
            <person name="Sasaki R."/>
            <person name="Masui N."/>
            <person name="Fuji F."/>
            <person name="Hirama C."/>
            <person name="Nakamura Y."/>
            <person name="Ogasawara N."/>
            <person name="Kuhara S."/>
            <person name="Horikoshi K."/>
        </authorList>
    </citation>
    <scope>NUCLEOTIDE SEQUENCE [LARGE SCALE GENOMIC DNA]</scope>
    <source>
        <strain>ATCC BAA-125 / DSM 18197 / FERM 7344 / JCM 9153 / C-125</strain>
    </source>
</reference>
<accession>Q9Z9J7</accession>
<accession>Q9JPX0</accession>